<gene>
    <name evidence="1" type="primary">plsB</name>
    <name type="ordered locus">YPTB0368</name>
</gene>
<dbReference type="EC" id="2.3.1.15" evidence="1"/>
<dbReference type="EMBL" id="BX936398">
    <property type="protein sequence ID" value="CAH19608.1"/>
    <property type="molecule type" value="Genomic_DNA"/>
</dbReference>
<dbReference type="RefSeq" id="WP_011191593.1">
    <property type="nucleotide sequence ID" value="NC_006155.1"/>
</dbReference>
<dbReference type="SMR" id="Q66FG9"/>
<dbReference type="KEGG" id="ypo:BZ17_2202"/>
<dbReference type="KEGG" id="yps:YPTB0368"/>
<dbReference type="PATRIC" id="fig|273123.14.peg.2331"/>
<dbReference type="UniPathway" id="UPA00557">
    <property type="reaction ID" value="UER00612"/>
</dbReference>
<dbReference type="Proteomes" id="UP000001011">
    <property type="component" value="Chromosome"/>
</dbReference>
<dbReference type="GO" id="GO:0005886">
    <property type="term" value="C:plasma membrane"/>
    <property type="evidence" value="ECO:0007669"/>
    <property type="project" value="UniProtKB-SubCell"/>
</dbReference>
<dbReference type="GO" id="GO:0004366">
    <property type="term" value="F:glycerol-3-phosphate O-acyltransferase activity"/>
    <property type="evidence" value="ECO:0007669"/>
    <property type="project" value="UniProtKB-UniRule"/>
</dbReference>
<dbReference type="GO" id="GO:0016024">
    <property type="term" value="P:CDP-diacylglycerol biosynthetic process"/>
    <property type="evidence" value="ECO:0007669"/>
    <property type="project" value="UniProtKB-UniRule"/>
</dbReference>
<dbReference type="GO" id="GO:0006631">
    <property type="term" value="P:fatty acid metabolic process"/>
    <property type="evidence" value="ECO:0007669"/>
    <property type="project" value="TreeGrafter"/>
</dbReference>
<dbReference type="CDD" id="cd07993">
    <property type="entry name" value="LPLAT_DHAPAT-like"/>
    <property type="match status" value="1"/>
</dbReference>
<dbReference type="HAMAP" id="MF_00393">
    <property type="entry name" value="Glyc3P_acyltrans"/>
    <property type="match status" value="1"/>
</dbReference>
<dbReference type="InterPro" id="IPR022284">
    <property type="entry name" value="GPAT/DHAPAT"/>
</dbReference>
<dbReference type="InterPro" id="IPR045520">
    <property type="entry name" value="GPAT/DHAPAT_C"/>
</dbReference>
<dbReference type="InterPro" id="IPR041728">
    <property type="entry name" value="GPAT/DHAPAT_LPLAT"/>
</dbReference>
<dbReference type="InterPro" id="IPR028354">
    <property type="entry name" value="GPAT_PlsB"/>
</dbReference>
<dbReference type="InterPro" id="IPR002123">
    <property type="entry name" value="Plipid/glycerol_acylTrfase"/>
</dbReference>
<dbReference type="NCBIfam" id="TIGR03703">
    <property type="entry name" value="plsB"/>
    <property type="match status" value="1"/>
</dbReference>
<dbReference type="NCBIfam" id="NF003441">
    <property type="entry name" value="PRK04974.1"/>
    <property type="match status" value="1"/>
</dbReference>
<dbReference type="PANTHER" id="PTHR12563:SF17">
    <property type="entry name" value="DIHYDROXYACETONE PHOSPHATE ACYLTRANSFERASE"/>
    <property type="match status" value="1"/>
</dbReference>
<dbReference type="PANTHER" id="PTHR12563">
    <property type="entry name" value="GLYCEROL-3-PHOSPHATE ACYLTRANSFERASE"/>
    <property type="match status" value="1"/>
</dbReference>
<dbReference type="Pfam" id="PF01553">
    <property type="entry name" value="Acyltransferase"/>
    <property type="match status" value="1"/>
</dbReference>
<dbReference type="Pfam" id="PF19277">
    <property type="entry name" value="GPAT_C"/>
    <property type="match status" value="1"/>
</dbReference>
<dbReference type="PIRSF" id="PIRSF500064">
    <property type="entry name" value="GPAT"/>
    <property type="match status" value="1"/>
</dbReference>
<dbReference type="PIRSF" id="PIRSF000437">
    <property type="entry name" value="GPAT_DHAPAT"/>
    <property type="match status" value="1"/>
</dbReference>
<dbReference type="SMART" id="SM00563">
    <property type="entry name" value="PlsC"/>
    <property type="match status" value="1"/>
</dbReference>
<dbReference type="SUPFAM" id="SSF69593">
    <property type="entry name" value="Glycerol-3-phosphate (1)-acyltransferase"/>
    <property type="match status" value="1"/>
</dbReference>
<reference key="1">
    <citation type="journal article" date="2004" name="Proc. Natl. Acad. Sci. U.S.A.">
        <title>Insights into the evolution of Yersinia pestis through whole-genome comparison with Yersinia pseudotuberculosis.</title>
        <authorList>
            <person name="Chain P.S.G."/>
            <person name="Carniel E."/>
            <person name="Larimer F.W."/>
            <person name="Lamerdin J."/>
            <person name="Stoutland P.O."/>
            <person name="Regala W.M."/>
            <person name="Georgescu A.M."/>
            <person name="Vergez L.M."/>
            <person name="Land M.L."/>
            <person name="Motin V.L."/>
            <person name="Brubaker R.R."/>
            <person name="Fowler J."/>
            <person name="Hinnebusch J."/>
            <person name="Marceau M."/>
            <person name="Medigue C."/>
            <person name="Simonet M."/>
            <person name="Chenal-Francisque V."/>
            <person name="Souza B."/>
            <person name="Dacheux D."/>
            <person name="Elliott J.M."/>
            <person name="Derbise A."/>
            <person name="Hauser L.J."/>
            <person name="Garcia E."/>
        </authorList>
    </citation>
    <scope>NUCLEOTIDE SEQUENCE [LARGE SCALE GENOMIC DNA]</scope>
    <source>
        <strain>IP32953</strain>
    </source>
</reference>
<keyword id="KW-0012">Acyltransferase</keyword>
<keyword id="KW-0997">Cell inner membrane</keyword>
<keyword id="KW-1003">Cell membrane</keyword>
<keyword id="KW-0444">Lipid biosynthesis</keyword>
<keyword id="KW-0443">Lipid metabolism</keyword>
<keyword id="KW-0472">Membrane</keyword>
<keyword id="KW-0594">Phospholipid biosynthesis</keyword>
<keyword id="KW-1208">Phospholipid metabolism</keyword>
<keyword id="KW-0808">Transferase</keyword>
<accession>Q66FG9</accession>
<proteinExistence type="inferred from homology"/>
<comment type="catalytic activity">
    <reaction evidence="1">
        <text>sn-glycerol 3-phosphate + an acyl-CoA = a 1-acyl-sn-glycero-3-phosphate + CoA</text>
        <dbReference type="Rhea" id="RHEA:15325"/>
        <dbReference type="ChEBI" id="CHEBI:57287"/>
        <dbReference type="ChEBI" id="CHEBI:57597"/>
        <dbReference type="ChEBI" id="CHEBI:57970"/>
        <dbReference type="ChEBI" id="CHEBI:58342"/>
        <dbReference type="EC" id="2.3.1.15"/>
    </reaction>
</comment>
<comment type="pathway">
    <text evidence="1">Phospholipid metabolism; CDP-diacylglycerol biosynthesis; CDP-diacylglycerol from sn-glycerol 3-phosphate: step 1/3.</text>
</comment>
<comment type="subcellular location">
    <subcellularLocation>
        <location evidence="1">Cell inner membrane</location>
        <topology evidence="1">Peripheral membrane protein</topology>
        <orientation evidence="1">Cytoplasmic side</orientation>
    </subcellularLocation>
</comment>
<comment type="domain">
    <text evidence="1">The HXXXXD motif is essential for acyltransferase activity and may constitute the binding site for the phosphate moiety of the glycerol-3-phosphate.</text>
</comment>
<comment type="similarity">
    <text evidence="1">Belongs to the GPAT/DAPAT family.</text>
</comment>
<protein>
    <recommendedName>
        <fullName evidence="1">Glycerol-3-phosphate acyltransferase</fullName>
        <shortName evidence="1">GPAT</shortName>
        <ecNumber evidence="1">2.3.1.15</ecNumber>
    </recommendedName>
</protein>
<feature type="chain" id="PRO_1000049474" description="Glycerol-3-phosphate acyltransferase">
    <location>
        <begin position="1"/>
        <end position="834"/>
    </location>
</feature>
<feature type="region of interest" description="Disordered" evidence="2">
    <location>
        <begin position="800"/>
        <end position="834"/>
    </location>
</feature>
<feature type="short sequence motif" description="HXXXXD motif">
    <location>
        <begin position="304"/>
        <end position="309"/>
    </location>
</feature>
<organism>
    <name type="scientific">Yersinia pseudotuberculosis serotype I (strain IP32953)</name>
    <dbReference type="NCBI Taxonomy" id="273123"/>
    <lineage>
        <taxon>Bacteria</taxon>
        <taxon>Pseudomonadati</taxon>
        <taxon>Pseudomonadota</taxon>
        <taxon>Gammaproteobacteria</taxon>
        <taxon>Enterobacterales</taxon>
        <taxon>Yersiniaceae</taxon>
        <taxon>Yersinia</taxon>
    </lineage>
</organism>
<evidence type="ECO:0000255" key="1">
    <source>
        <dbReference type="HAMAP-Rule" id="MF_00393"/>
    </source>
</evidence>
<evidence type="ECO:0000256" key="2">
    <source>
        <dbReference type="SAM" id="MobiDB-lite"/>
    </source>
</evidence>
<sequence length="834" mass="94603">MSGWRKIYYKLLNLPLKLLVKSKVIPADPVSELGLDPSRPILYVLPYNSKADLLTLRAQCLAQDLPDPLIPLEIDGVQLPSHVFIENGPRVFRYYVPKQESVKLFHDYLDLHRNNPALDIQMLPVSVMFGRSPGREGHGTPHLRVLNGVQKFFAVLWLGRDSFVRFSTTVSLRRMASEHGTDKTIAHKLARVARMHFSRQRLAAVGPSLPARQDLFKKLLASKAIEKAVADEARSKKISHEKAQQNAITLMEEIAANFSYEAVRLSDRVLSWTWNRLYQGINVHNAERVRQLAQDGHEIVYVPCHRSHMDYLLLSYVLYHQGLVPPHIAAGINLNFWPAGPIFRRLGAFFIRRTFKGNKLYSTVFREYLGELFTRGYSVEYFVEGGRSRTGRLLEPKTGTLSMTIQAMLRGGTRPITLVPIYIGYEHVMEVGTYAKELRGAIKEKENLLQMLRGLRKLRNLGQGYVNFGEPLPLTTYLNTHVPQWRDAIDPIEAQRPSWLTPAVNDLANQIMVRINNAAAANAMNLCSTALLASRQRSLTREQLLEQLDCYLQLMRNAPYAKDTTVPDKTPEELLNHALNMNKFEVEKDTIGDIIILPREQAVLMTYYRNNIQHLLILPSLIASMVMYHRRITRTELLHKISMIYPMLKAELFLHYSKEQLPETLDTLIDELARQQLICDKGSELVLNPARIRPLQLLAAGVRETLQRYAITLSLLSATPSINRGALEKESRIMAQRLSVLHGINAPEFFDKAVFSTLVATLREEGYISDSGDAIQEHTLEVYNMLSALMTPEVKLTIESVSMPAETSNQPEAPETPETPETPETPEPEGKTES</sequence>
<name>PLSB_YERPS</name>